<keyword id="KW-0028">Amino-acid biosynthesis</keyword>
<keyword id="KW-0963">Cytoplasm</keyword>
<keyword id="KW-0223">Dioxygenase</keyword>
<keyword id="KW-0408">Iron</keyword>
<keyword id="KW-0479">Metal-binding</keyword>
<keyword id="KW-0486">Methionine biosynthesis</keyword>
<keyword id="KW-0533">Nickel</keyword>
<keyword id="KW-0539">Nucleus</keyword>
<keyword id="KW-0560">Oxidoreductase</keyword>
<keyword id="KW-1185">Reference proteome</keyword>
<reference key="1">
    <citation type="journal article" date="2011" name="Proc. Natl. Acad. Sci. U.S.A.">
        <title>Obligate biotrophy features unraveled by the genomic analysis of rust fungi.</title>
        <authorList>
            <person name="Duplessis S."/>
            <person name="Cuomo C.A."/>
            <person name="Lin Y.-C."/>
            <person name="Aerts A."/>
            <person name="Tisserant E."/>
            <person name="Veneault-Fourrey C."/>
            <person name="Joly D.L."/>
            <person name="Hacquard S."/>
            <person name="Amselem J."/>
            <person name="Cantarel B.L."/>
            <person name="Chiu R."/>
            <person name="Coutinho P.M."/>
            <person name="Feau N."/>
            <person name="Field M."/>
            <person name="Frey P."/>
            <person name="Gelhaye E."/>
            <person name="Goldberg J."/>
            <person name="Grabherr M.G."/>
            <person name="Kodira C.D."/>
            <person name="Kohler A."/>
            <person name="Kuees U."/>
            <person name="Lindquist E.A."/>
            <person name="Lucas S.M."/>
            <person name="Mago R."/>
            <person name="Mauceli E."/>
            <person name="Morin E."/>
            <person name="Murat C."/>
            <person name="Pangilinan J.L."/>
            <person name="Park R."/>
            <person name="Pearson M."/>
            <person name="Quesneville H."/>
            <person name="Rouhier N."/>
            <person name="Sakthikumar S."/>
            <person name="Salamov A.A."/>
            <person name="Schmutz J."/>
            <person name="Selles B."/>
            <person name="Shapiro H."/>
            <person name="Tanguay P."/>
            <person name="Tuskan G.A."/>
            <person name="Henrissat B."/>
            <person name="Van de Peer Y."/>
            <person name="Rouze P."/>
            <person name="Ellis J.G."/>
            <person name="Dodds P.N."/>
            <person name="Schein J.E."/>
            <person name="Zhong S."/>
            <person name="Hamelin R.C."/>
            <person name="Grigoriev I.V."/>
            <person name="Szabo L.J."/>
            <person name="Martin F."/>
        </authorList>
    </citation>
    <scope>NUCLEOTIDE SEQUENCE [LARGE SCALE GENOMIC DNA]</scope>
    <source>
        <strain>CRL 75-36-700-3 / race SCCL</strain>
    </source>
</reference>
<reference key="2">
    <citation type="journal article" date="2017" name="G3 (Bethesda)">
        <title>Comparative analysis highlights variable genome content of wheat rusts and divergence of the mating loci.</title>
        <authorList>
            <person name="Cuomo C.A."/>
            <person name="Bakkeren G."/>
            <person name="Khalil H.B."/>
            <person name="Panwar V."/>
            <person name="Joly D."/>
            <person name="Linning R."/>
            <person name="Sakthikumar S."/>
            <person name="Song X."/>
            <person name="Adiconis X."/>
            <person name="Fan L."/>
            <person name="Goldberg J.M."/>
            <person name="Levin J.Z."/>
            <person name="Young S."/>
            <person name="Zeng Q."/>
            <person name="Anikster Y."/>
            <person name="Bruce M."/>
            <person name="Wang M."/>
            <person name="Yin C."/>
            <person name="McCallum B."/>
            <person name="Szabo L.J."/>
            <person name="Hulbert S."/>
            <person name="Chen X."/>
            <person name="Fellers J.P."/>
        </authorList>
    </citation>
    <scope>GENOME REANNOTATION</scope>
    <source>
        <strain>CRL 75-36-700-3 / race SCCL</strain>
    </source>
</reference>
<protein>
    <recommendedName>
        <fullName evidence="1">Acireductone dioxygenase</fullName>
    </recommendedName>
    <alternativeName>
        <fullName evidence="1">Acireductone dioxygenase (Fe(2+)-requiring)</fullName>
        <shortName evidence="1">ARD'</shortName>
        <shortName evidence="1">Fe-ARD</shortName>
        <ecNumber evidence="1">1.13.11.54</ecNumber>
    </alternativeName>
    <alternativeName>
        <fullName evidence="1">Acireductone dioxygenase (Ni(2+)-requiring)</fullName>
        <shortName evidence="1">ARD</shortName>
        <shortName evidence="1">Ni-ARD</shortName>
        <ecNumber evidence="1">1.13.11.53</ecNumber>
    </alternativeName>
</protein>
<accession>E3KY53</accession>
<feature type="chain" id="PRO_0000414365" description="Acireductone dioxygenase">
    <location>
        <begin position="1"/>
        <end position="181"/>
    </location>
</feature>
<feature type="region of interest" description="Disordered" evidence="2">
    <location>
        <begin position="1"/>
        <end position="23"/>
    </location>
</feature>
<feature type="compositionally biased region" description="Acidic residues" evidence="2">
    <location>
        <begin position="1"/>
        <end position="10"/>
    </location>
</feature>
<feature type="binding site" evidence="1">
    <location>
        <position position="82"/>
    </location>
    <ligand>
        <name>Fe(2+)</name>
        <dbReference type="ChEBI" id="CHEBI:29033"/>
        <note>for iron-dependent acireductone dioxygenase activity</note>
    </ligand>
</feature>
<feature type="binding site" evidence="1">
    <location>
        <position position="82"/>
    </location>
    <ligand>
        <name>Ni(2+)</name>
        <dbReference type="ChEBI" id="CHEBI:49786"/>
        <note>for nickel-dependent acireductone dioxygenase activity</note>
    </ligand>
</feature>
<feature type="binding site" evidence="1">
    <location>
        <position position="84"/>
    </location>
    <ligand>
        <name>Fe(2+)</name>
        <dbReference type="ChEBI" id="CHEBI:29033"/>
        <note>for iron-dependent acireductone dioxygenase activity</note>
    </ligand>
</feature>
<feature type="binding site" evidence="1">
    <location>
        <position position="84"/>
    </location>
    <ligand>
        <name>Ni(2+)</name>
        <dbReference type="ChEBI" id="CHEBI:49786"/>
        <note>for nickel-dependent acireductone dioxygenase activity</note>
    </ligand>
</feature>
<feature type="binding site" evidence="1">
    <location>
        <position position="88"/>
    </location>
    <ligand>
        <name>Fe(2+)</name>
        <dbReference type="ChEBI" id="CHEBI:29033"/>
        <note>for iron-dependent acireductone dioxygenase activity</note>
    </ligand>
</feature>
<feature type="binding site" evidence="1">
    <location>
        <position position="88"/>
    </location>
    <ligand>
        <name>Ni(2+)</name>
        <dbReference type="ChEBI" id="CHEBI:49786"/>
        <note>for nickel-dependent acireductone dioxygenase activity</note>
    </ligand>
</feature>
<feature type="binding site" evidence="1">
    <location>
        <position position="128"/>
    </location>
    <ligand>
        <name>Fe(2+)</name>
        <dbReference type="ChEBI" id="CHEBI:29033"/>
        <note>for iron-dependent acireductone dioxygenase activity</note>
    </ligand>
</feature>
<feature type="binding site" evidence="1">
    <location>
        <position position="128"/>
    </location>
    <ligand>
        <name>Ni(2+)</name>
        <dbReference type="ChEBI" id="CHEBI:49786"/>
        <note>for nickel-dependent acireductone dioxygenase activity</note>
    </ligand>
</feature>
<sequence length="181" mass="21336">MRAYIYDEESQLSPQDEHESSQSVSKQELEKLGVLYWSIDSIDQVNSIAIQRDYKNRDQIICSPQAMGDIYQQKLDTFFEEHLHEDEEIRWVVEGSGYFDVRDQTDQRWVRIKVEKGDLLVLPPGIFHRFTVDKDNYIKAMRLFKDEPKWVALNRSTESESNPYRKAYIEQVGKAMTMGAF</sequence>
<organism>
    <name type="scientific">Puccinia graminis f. sp. tritici (strain CRL 75-36-700-3 / race SCCL)</name>
    <name type="common">Black stem rust fungus</name>
    <dbReference type="NCBI Taxonomy" id="418459"/>
    <lineage>
        <taxon>Eukaryota</taxon>
        <taxon>Fungi</taxon>
        <taxon>Dikarya</taxon>
        <taxon>Basidiomycota</taxon>
        <taxon>Pucciniomycotina</taxon>
        <taxon>Pucciniomycetes</taxon>
        <taxon>Pucciniales</taxon>
        <taxon>Pucciniaceae</taxon>
        <taxon>Puccinia</taxon>
    </lineage>
</organism>
<name>MTND_PUCGT</name>
<proteinExistence type="inferred from homology"/>
<gene>
    <name evidence="1" type="primary">ADI1</name>
    <name type="ORF">PGTG_15095</name>
</gene>
<dbReference type="EC" id="1.13.11.54" evidence="1"/>
<dbReference type="EC" id="1.13.11.53" evidence="1"/>
<dbReference type="EMBL" id="DS178320">
    <property type="protein sequence ID" value="EFP89254.1"/>
    <property type="molecule type" value="Genomic_DNA"/>
</dbReference>
<dbReference type="RefSeq" id="XP_003333673.1">
    <property type="nucleotide sequence ID" value="XM_003333625.2"/>
</dbReference>
<dbReference type="SMR" id="E3KY53"/>
<dbReference type="FunCoup" id="E3KY53">
    <property type="interactions" value="97"/>
</dbReference>
<dbReference type="STRING" id="418459.E3KY53"/>
<dbReference type="EnsemblFungi" id="EFP89254">
    <property type="protein sequence ID" value="EFP89254"/>
    <property type="gene ID" value="PGTG_15095"/>
</dbReference>
<dbReference type="GeneID" id="10546891"/>
<dbReference type="KEGG" id="pgr:PGTG_15095"/>
<dbReference type="VEuPathDB" id="FungiDB:PGTG_15095"/>
<dbReference type="eggNOG" id="KOG2107">
    <property type="taxonomic scope" value="Eukaryota"/>
</dbReference>
<dbReference type="HOGENOM" id="CLU_090154_1_0_1"/>
<dbReference type="InParanoid" id="E3KY53"/>
<dbReference type="OMA" id="WYMDESQ"/>
<dbReference type="OrthoDB" id="1867259at2759"/>
<dbReference type="UniPathway" id="UPA00904">
    <property type="reaction ID" value="UER00878"/>
</dbReference>
<dbReference type="Proteomes" id="UP000008783">
    <property type="component" value="Unassembled WGS sequence"/>
</dbReference>
<dbReference type="GO" id="GO:0005737">
    <property type="term" value="C:cytoplasm"/>
    <property type="evidence" value="ECO:0007669"/>
    <property type="project" value="UniProtKB-SubCell"/>
</dbReference>
<dbReference type="GO" id="GO:0005634">
    <property type="term" value="C:nucleus"/>
    <property type="evidence" value="ECO:0007669"/>
    <property type="project" value="UniProtKB-SubCell"/>
</dbReference>
<dbReference type="GO" id="GO:0010308">
    <property type="term" value="F:acireductone dioxygenase (Ni2+-requiring) activity"/>
    <property type="evidence" value="ECO:0007669"/>
    <property type="project" value="UniProtKB-UniRule"/>
</dbReference>
<dbReference type="GO" id="GO:0010309">
    <property type="term" value="F:acireductone dioxygenase [iron(II)-requiring] activity"/>
    <property type="evidence" value="ECO:0000318"/>
    <property type="project" value="GO_Central"/>
</dbReference>
<dbReference type="GO" id="GO:0005506">
    <property type="term" value="F:iron ion binding"/>
    <property type="evidence" value="ECO:0007669"/>
    <property type="project" value="UniProtKB-UniRule"/>
</dbReference>
<dbReference type="GO" id="GO:0016151">
    <property type="term" value="F:nickel cation binding"/>
    <property type="evidence" value="ECO:0007669"/>
    <property type="project" value="UniProtKB-UniRule"/>
</dbReference>
<dbReference type="GO" id="GO:0019509">
    <property type="term" value="P:L-methionine salvage from methylthioadenosine"/>
    <property type="evidence" value="ECO:0007669"/>
    <property type="project" value="UniProtKB-UniRule"/>
</dbReference>
<dbReference type="GO" id="GO:0006555">
    <property type="term" value="P:methionine metabolic process"/>
    <property type="evidence" value="ECO:0000318"/>
    <property type="project" value="GO_Central"/>
</dbReference>
<dbReference type="CDD" id="cd02232">
    <property type="entry name" value="cupin_ARD"/>
    <property type="match status" value="1"/>
</dbReference>
<dbReference type="FunFam" id="2.60.120.10:FF:000079">
    <property type="entry name" value="1,2-dihydroxy-3-keto-5-methylthiopentene dioxygenase"/>
    <property type="match status" value="1"/>
</dbReference>
<dbReference type="Gene3D" id="2.60.120.10">
    <property type="entry name" value="Jelly Rolls"/>
    <property type="match status" value="1"/>
</dbReference>
<dbReference type="HAMAP" id="MF_03154">
    <property type="entry name" value="Salvage_MtnD_euk"/>
    <property type="match status" value="1"/>
</dbReference>
<dbReference type="InterPro" id="IPR004313">
    <property type="entry name" value="ARD"/>
</dbReference>
<dbReference type="InterPro" id="IPR027496">
    <property type="entry name" value="ARD_euk"/>
</dbReference>
<dbReference type="InterPro" id="IPR014710">
    <property type="entry name" value="RmlC-like_jellyroll"/>
</dbReference>
<dbReference type="InterPro" id="IPR011051">
    <property type="entry name" value="RmlC_Cupin_sf"/>
</dbReference>
<dbReference type="PANTHER" id="PTHR23418">
    <property type="entry name" value="ACIREDUCTONE DIOXYGENASE"/>
    <property type="match status" value="1"/>
</dbReference>
<dbReference type="PANTHER" id="PTHR23418:SF0">
    <property type="entry name" value="ACIREDUCTONE DIOXYGENASE"/>
    <property type="match status" value="1"/>
</dbReference>
<dbReference type="Pfam" id="PF03079">
    <property type="entry name" value="ARD"/>
    <property type="match status" value="1"/>
</dbReference>
<dbReference type="SUPFAM" id="SSF51182">
    <property type="entry name" value="RmlC-like cupins"/>
    <property type="match status" value="1"/>
</dbReference>
<comment type="function">
    <text evidence="1">Catalyzes 2 different reactions between oxygen and the acireductone 1,2-dihydroxy-3-keto-5-methylthiopentene (DHK-MTPene) depending upon the metal bound in the active site. Fe-containing acireductone dioxygenase (Fe-ARD) produces formate and 2-keto-4-methylthiobutyrate (KMTB), the alpha-ketoacid precursor of methionine in the methionine recycle pathway. Ni-containing acireductone dioxygenase (Ni-ARD) produces methylthiopropionate, carbon monoxide and formate, and does not lie on the methionine recycle pathway.</text>
</comment>
<comment type="catalytic activity">
    <reaction evidence="1">
        <text>1,2-dihydroxy-5-(methylsulfanyl)pent-1-en-3-one + O2 = 4-methylsulfanyl-2-oxobutanoate + formate + 2 H(+)</text>
        <dbReference type="Rhea" id="RHEA:24504"/>
        <dbReference type="ChEBI" id="CHEBI:15378"/>
        <dbReference type="ChEBI" id="CHEBI:15379"/>
        <dbReference type="ChEBI" id="CHEBI:15740"/>
        <dbReference type="ChEBI" id="CHEBI:16723"/>
        <dbReference type="ChEBI" id="CHEBI:49252"/>
        <dbReference type="EC" id="1.13.11.54"/>
    </reaction>
</comment>
<comment type="catalytic activity">
    <reaction evidence="1">
        <text>1,2-dihydroxy-5-(methylsulfanyl)pent-1-en-3-one + O2 = 3-(methylsulfanyl)propanoate + CO + formate + 2 H(+)</text>
        <dbReference type="Rhea" id="RHEA:14161"/>
        <dbReference type="ChEBI" id="CHEBI:15378"/>
        <dbReference type="ChEBI" id="CHEBI:15379"/>
        <dbReference type="ChEBI" id="CHEBI:15740"/>
        <dbReference type="ChEBI" id="CHEBI:17245"/>
        <dbReference type="ChEBI" id="CHEBI:49016"/>
        <dbReference type="ChEBI" id="CHEBI:49252"/>
        <dbReference type="EC" id="1.13.11.53"/>
    </reaction>
</comment>
<comment type="cofactor">
    <cofactor evidence="1">
        <name>Fe(2+)</name>
        <dbReference type="ChEBI" id="CHEBI:29033"/>
    </cofactor>
    <cofactor evidence="1">
        <name>Ni(2+)</name>
        <dbReference type="ChEBI" id="CHEBI:49786"/>
    </cofactor>
    <text evidence="1">Binds either 1 Fe or Ni cation per monomer. Iron-binding promotes an acireductone dioxygenase reaction producing 2-keto-4-methylthiobutyrate, while nickel-binding promotes an acireductone dioxygenase reaction producing 3-(methylsulfanyl)propanoate.</text>
</comment>
<comment type="pathway">
    <text evidence="1">Amino-acid biosynthesis; L-methionine biosynthesis via salvage pathway; L-methionine from S-methyl-5-thio-alpha-D-ribose 1-phosphate: step 5/6.</text>
</comment>
<comment type="subcellular location">
    <subcellularLocation>
        <location evidence="1">Cytoplasm</location>
    </subcellularLocation>
    <subcellularLocation>
        <location evidence="1">Nucleus</location>
    </subcellularLocation>
</comment>
<comment type="similarity">
    <text evidence="1">Belongs to the acireductone dioxygenase (ARD) family.</text>
</comment>
<evidence type="ECO:0000255" key="1">
    <source>
        <dbReference type="HAMAP-Rule" id="MF_03154"/>
    </source>
</evidence>
<evidence type="ECO:0000256" key="2">
    <source>
        <dbReference type="SAM" id="MobiDB-lite"/>
    </source>
</evidence>